<reference key="1">
    <citation type="journal article" date="2010" name="BMC Genomics">
        <title>Complete genome sequence and lifestyle of black-pigmented Corynebacterium aurimucosum ATCC 700975 (formerly C. nigricans CN-1) isolated from a vaginal swab of a woman with spontaneous abortion.</title>
        <authorList>
            <person name="Trost E."/>
            <person name="Gotker S."/>
            <person name="Schneider J."/>
            <person name="Schneiker-Bekel S."/>
            <person name="Szczepanowski R."/>
            <person name="Tilker A."/>
            <person name="Viehoever P."/>
            <person name="Arnold W."/>
            <person name="Bekel T."/>
            <person name="Blom J."/>
            <person name="Gartemann K.H."/>
            <person name="Linke B."/>
            <person name="Goesmann A."/>
            <person name="Puhler A."/>
            <person name="Shukla S.K."/>
            <person name="Tauch A."/>
        </authorList>
    </citation>
    <scope>NUCLEOTIDE SEQUENCE [LARGE SCALE GENOMIC DNA]</scope>
    <source>
        <strain>ATCC 700975 / DSM 44827 / CIP 107346 / CN-1</strain>
    </source>
</reference>
<accession>C3PKL8</accession>
<evidence type="ECO:0000255" key="1">
    <source>
        <dbReference type="HAMAP-Rule" id="MF_01318"/>
    </source>
</evidence>
<evidence type="ECO:0000305" key="2"/>
<keyword id="KW-1185">Reference proteome</keyword>
<keyword id="KW-0678">Repressor</keyword>
<keyword id="KW-0687">Ribonucleoprotein</keyword>
<keyword id="KW-0689">Ribosomal protein</keyword>
<keyword id="KW-0694">RNA-binding</keyword>
<keyword id="KW-0699">rRNA-binding</keyword>
<keyword id="KW-0810">Translation regulation</keyword>
<keyword id="KW-0820">tRNA-binding</keyword>
<name>RL1_CORA7</name>
<proteinExistence type="inferred from homology"/>
<feature type="chain" id="PRO_1000165674" description="Large ribosomal subunit protein uL1">
    <location>
        <begin position="1"/>
        <end position="234"/>
    </location>
</feature>
<sequence length="234" mass="24660">MSTKSKAYKAAAELVDRSRLYRPIEAAKLAKETSSKNFDATVDVVFRLGVDPRKADQLVRGTVSLPHGTGKDVRVAVFAEGDNAEAAKAAGADIVGTEELIAAINEGNIDFDVAIATPDQMAKVGRVARVLGPRGLMPNPKTGTVTADVTKAVADVKGGKISFRVDKASNLHAIIGKASFDAEKLAENYGALYDEIIRLKPSSAKGIYAKKITISTTSGPGIPVDASVEKNYTD</sequence>
<gene>
    <name evidence="1" type="primary">rplA</name>
    <name type="ordered locus">cauri_0355</name>
</gene>
<protein>
    <recommendedName>
        <fullName evidence="1">Large ribosomal subunit protein uL1</fullName>
    </recommendedName>
    <alternativeName>
        <fullName evidence="2">50S ribosomal protein L1</fullName>
    </alternativeName>
</protein>
<organism>
    <name type="scientific">Corynebacterium aurimucosum (strain ATCC 700975 / DSM 44827 / CIP 107346 / CN-1)</name>
    <name type="common">Corynebacterium nigricans</name>
    <dbReference type="NCBI Taxonomy" id="548476"/>
    <lineage>
        <taxon>Bacteria</taxon>
        <taxon>Bacillati</taxon>
        <taxon>Actinomycetota</taxon>
        <taxon>Actinomycetes</taxon>
        <taxon>Mycobacteriales</taxon>
        <taxon>Corynebacteriaceae</taxon>
        <taxon>Corynebacterium</taxon>
    </lineage>
</organism>
<dbReference type="EMBL" id="CP001601">
    <property type="protein sequence ID" value="ACP31954.1"/>
    <property type="molecule type" value="Genomic_DNA"/>
</dbReference>
<dbReference type="RefSeq" id="WP_010189722.1">
    <property type="nucleotide sequence ID" value="NC_012590.1"/>
</dbReference>
<dbReference type="SMR" id="C3PKL8"/>
<dbReference type="STRING" id="548476.cauri_0355"/>
<dbReference type="GeneID" id="31922975"/>
<dbReference type="KEGG" id="car:cauri_0355"/>
<dbReference type="eggNOG" id="COG0081">
    <property type="taxonomic scope" value="Bacteria"/>
</dbReference>
<dbReference type="HOGENOM" id="CLU_062853_0_0_11"/>
<dbReference type="OrthoDB" id="9803740at2"/>
<dbReference type="Proteomes" id="UP000002077">
    <property type="component" value="Chromosome"/>
</dbReference>
<dbReference type="GO" id="GO:0015934">
    <property type="term" value="C:large ribosomal subunit"/>
    <property type="evidence" value="ECO:0007669"/>
    <property type="project" value="InterPro"/>
</dbReference>
<dbReference type="GO" id="GO:0019843">
    <property type="term" value="F:rRNA binding"/>
    <property type="evidence" value="ECO:0007669"/>
    <property type="project" value="UniProtKB-UniRule"/>
</dbReference>
<dbReference type="GO" id="GO:0003735">
    <property type="term" value="F:structural constituent of ribosome"/>
    <property type="evidence" value="ECO:0007669"/>
    <property type="project" value="InterPro"/>
</dbReference>
<dbReference type="GO" id="GO:0000049">
    <property type="term" value="F:tRNA binding"/>
    <property type="evidence" value="ECO:0007669"/>
    <property type="project" value="UniProtKB-KW"/>
</dbReference>
<dbReference type="GO" id="GO:0006417">
    <property type="term" value="P:regulation of translation"/>
    <property type="evidence" value="ECO:0007669"/>
    <property type="project" value="UniProtKB-KW"/>
</dbReference>
<dbReference type="GO" id="GO:0006412">
    <property type="term" value="P:translation"/>
    <property type="evidence" value="ECO:0007669"/>
    <property type="project" value="UniProtKB-UniRule"/>
</dbReference>
<dbReference type="CDD" id="cd00403">
    <property type="entry name" value="Ribosomal_L1"/>
    <property type="match status" value="1"/>
</dbReference>
<dbReference type="FunFam" id="3.40.50.790:FF:000001">
    <property type="entry name" value="50S ribosomal protein L1"/>
    <property type="match status" value="1"/>
</dbReference>
<dbReference type="Gene3D" id="3.30.190.20">
    <property type="match status" value="1"/>
</dbReference>
<dbReference type="Gene3D" id="3.40.50.790">
    <property type="match status" value="1"/>
</dbReference>
<dbReference type="HAMAP" id="MF_01318_B">
    <property type="entry name" value="Ribosomal_uL1_B"/>
    <property type="match status" value="1"/>
</dbReference>
<dbReference type="InterPro" id="IPR005878">
    <property type="entry name" value="Ribosom_uL1_bac-type"/>
</dbReference>
<dbReference type="InterPro" id="IPR002143">
    <property type="entry name" value="Ribosomal_uL1"/>
</dbReference>
<dbReference type="InterPro" id="IPR023674">
    <property type="entry name" value="Ribosomal_uL1-like"/>
</dbReference>
<dbReference type="InterPro" id="IPR028364">
    <property type="entry name" value="Ribosomal_uL1/biogenesis"/>
</dbReference>
<dbReference type="InterPro" id="IPR016095">
    <property type="entry name" value="Ribosomal_uL1_3-a/b-sand"/>
</dbReference>
<dbReference type="InterPro" id="IPR023673">
    <property type="entry name" value="Ribosomal_uL1_CS"/>
</dbReference>
<dbReference type="NCBIfam" id="TIGR01169">
    <property type="entry name" value="rplA_bact"/>
    <property type="match status" value="1"/>
</dbReference>
<dbReference type="PANTHER" id="PTHR36427">
    <property type="entry name" value="54S RIBOSOMAL PROTEIN L1, MITOCHONDRIAL"/>
    <property type="match status" value="1"/>
</dbReference>
<dbReference type="PANTHER" id="PTHR36427:SF3">
    <property type="entry name" value="LARGE RIBOSOMAL SUBUNIT PROTEIN UL1M"/>
    <property type="match status" value="1"/>
</dbReference>
<dbReference type="Pfam" id="PF00687">
    <property type="entry name" value="Ribosomal_L1"/>
    <property type="match status" value="1"/>
</dbReference>
<dbReference type="PIRSF" id="PIRSF002155">
    <property type="entry name" value="Ribosomal_L1"/>
    <property type="match status" value="1"/>
</dbReference>
<dbReference type="SUPFAM" id="SSF56808">
    <property type="entry name" value="Ribosomal protein L1"/>
    <property type="match status" value="1"/>
</dbReference>
<dbReference type="PROSITE" id="PS01199">
    <property type="entry name" value="RIBOSOMAL_L1"/>
    <property type="match status" value="1"/>
</dbReference>
<comment type="function">
    <text evidence="1">Binds directly to 23S rRNA. The L1 stalk is quite mobile in the ribosome, and is involved in E site tRNA release.</text>
</comment>
<comment type="function">
    <text evidence="1">Protein L1 is also a translational repressor protein, it controls the translation of the L11 operon by binding to its mRNA.</text>
</comment>
<comment type="subunit">
    <text evidence="1">Part of the 50S ribosomal subunit.</text>
</comment>
<comment type="similarity">
    <text evidence="1">Belongs to the universal ribosomal protein uL1 family.</text>
</comment>